<name>HIS7_XANAC</name>
<gene>
    <name evidence="1" type="primary">hisB</name>
    <name type="ordered locus">XAC1831</name>
</gene>
<proteinExistence type="inferred from homology"/>
<sequence>MTPILFVDRDGTLIVEPADYQIDAYEKLRLVDHVIPAMLKLRDAGYQFVIVSNQDGLGSESYPRASFDGPNNLMLQIFASQGIEFREVLIDCSWPADNAPTRKPGIGLMVPYLQDRTIDWARSAMVGDRITDIQFAQNLNIRGFQLRTDEFGGEWDWSGIAHELADAPRRALVQRNTKETRIRVELDLDRVAEPKTATGLPFFDHMLEQIGKHGGFALEIRAEGDLHIDEHHTIEDTGLALGQALREALGDKRGIGRYGFDPESSPWRVAGDTPQHGFTLPMDETIASAALDFSGRPYFVFEGEFKRERVGDMPTELVPHFFRSICDASGLNLHLTVRGENDHHKVEACFKALARALRQAIRREGTALPTTKGTL</sequence>
<keyword id="KW-0028">Amino-acid biosynthesis</keyword>
<keyword id="KW-0963">Cytoplasm</keyword>
<keyword id="KW-0368">Histidine biosynthesis</keyword>
<keyword id="KW-0378">Hydrolase</keyword>
<keyword id="KW-0456">Lyase</keyword>
<keyword id="KW-0460">Magnesium</keyword>
<keyword id="KW-0479">Metal-binding</keyword>
<keyword id="KW-0511">Multifunctional enzyme</keyword>
<feature type="chain" id="PRO_0000158227" description="Histidine biosynthesis bifunctional protein HisB">
    <location>
        <begin position="1"/>
        <end position="375"/>
    </location>
</feature>
<feature type="region of interest" description="Histidinol-phosphatase" evidence="1">
    <location>
        <begin position="1"/>
        <end position="168"/>
    </location>
</feature>
<feature type="region of interest" description="Imidazoleglycerol-phosphate dehydratase" evidence="1">
    <location>
        <begin position="169"/>
        <end position="375"/>
    </location>
</feature>
<feature type="active site" description="Nucleophile" evidence="1">
    <location>
        <position position="8"/>
    </location>
</feature>
<feature type="active site" description="Proton donor" evidence="1">
    <location>
        <position position="10"/>
    </location>
</feature>
<feature type="binding site" evidence="1">
    <location>
        <position position="8"/>
    </location>
    <ligand>
        <name>Mg(2+)</name>
        <dbReference type="ChEBI" id="CHEBI:18420"/>
    </ligand>
</feature>
<feature type="binding site" evidence="1">
    <location>
        <position position="10"/>
    </location>
    <ligand>
        <name>Mg(2+)</name>
        <dbReference type="ChEBI" id="CHEBI:18420"/>
    </ligand>
</feature>
<feature type="binding site" evidence="1">
    <location>
        <position position="128"/>
    </location>
    <ligand>
        <name>Mg(2+)</name>
        <dbReference type="ChEBI" id="CHEBI:18420"/>
    </ligand>
</feature>
<organism>
    <name type="scientific">Xanthomonas axonopodis pv. citri (strain 306)</name>
    <dbReference type="NCBI Taxonomy" id="190486"/>
    <lineage>
        <taxon>Bacteria</taxon>
        <taxon>Pseudomonadati</taxon>
        <taxon>Pseudomonadota</taxon>
        <taxon>Gammaproteobacteria</taxon>
        <taxon>Lysobacterales</taxon>
        <taxon>Lysobacteraceae</taxon>
        <taxon>Xanthomonas</taxon>
    </lineage>
</organism>
<accession>P58881</accession>
<dbReference type="EC" id="3.1.3.15" evidence="1"/>
<dbReference type="EC" id="4.2.1.19" evidence="1"/>
<dbReference type="EMBL" id="AE008923">
    <property type="protein sequence ID" value="AAM36693.1"/>
    <property type="molecule type" value="Genomic_DNA"/>
</dbReference>
<dbReference type="RefSeq" id="WP_011051171.1">
    <property type="nucleotide sequence ID" value="NC_003919.1"/>
</dbReference>
<dbReference type="SMR" id="P58881"/>
<dbReference type="GeneID" id="66910977"/>
<dbReference type="KEGG" id="xac:XAC1831"/>
<dbReference type="eggNOG" id="COG0131">
    <property type="taxonomic scope" value="Bacteria"/>
</dbReference>
<dbReference type="eggNOG" id="COG0241">
    <property type="taxonomic scope" value="Bacteria"/>
</dbReference>
<dbReference type="HOGENOM" id="CLU_044308_0_0_6"/>
<dbReference type="UniPathway" id="UPA00031">
    <property type="reaction ID" value="UER00011"/>
</dbReference>
<dbReference type="UniPathway" id="UPA00031">
    <property type="reaction ID" value="UER00013"/>
</dbReference>
<dbReference type="Proteomes" id="UP000000576">
    <property type="component" value="Chromosome"/>
</dbReference>
<dbReference type="GO" id="GO:0005737">
    <property type="term" value="C:cytoplasm"/>
    <property type="evidence" value="ECO:0007669"/>
    <property type="project" value="UniProtKB-SubCell"/>
</dbReference>
<dbReference type="GO" id="GO:0004401">
    <property type="term" value="F:histidinol-phosphatase activity"/>
    <property type="evidence" value="ECO:0007669"/>
    <property type="project" value="UniProtKB-UniRule"/>
</dbReference>
<dbReference type="GO" id="GO:0004424">
    <property type="term" value="F:imidazoleglycerol-phosphate dehydratase activity"/>
    <property type="evidence" value="ECO:0007669"/>
    <property type="project" value="UniProtKB-UniRule"/>
</dbReference>
<dbReference type="GO" id="GO:0046872">
    <property type="term" value="F:metal ion binding"/>
    <property type="evidence" value="ECO:0007669"/>
    <property type="project" value="UniProtKB-KW"/>
</dbReference>
<dbReference type="GO" id="GO:0000105">
    <property type="term" value="P:L-histidine biosynthetic process"/>
    <property type="evidence" value="ECO:0007669"/>
    <property type="project" value="UniProtKB-UniRule"/>
</dbReference>
<dbReference type="CDD" id="cd07914">
    <property type="entry name" value="IGPD"/>
    <property type="match status" value="1"/>
</dbReference>
<dbReference type="FunFam" id="3.30.230.40:FF:000001">
    <property type="entry name" value="Imidazoleglycerol-phosphate dehydratase HisB"/>
    <property type="match status" value="1"/>
</dbReference>
<dbReference type="FunFam" id="3.30.230.40:FF:000003">
    <property type="entry name" value="Imidazoleglycerol-phosphate dehydratase HisB"/>
    <property type="match status" value="1"/>
</dbReference>
<dbReference type="Gene3D" id="3.40.50.1000">
    <property type="entry name" value="HAD superfamily/HAD-like"/>
    <property type="match status" value="1"/>
</dbReference>
<dbReference type="Gene3D" id="3.30.230.40">
    <property type="entry name" value="Imidazole glycerol phosphate dehydratase, domain 1"/>
    <property type="match status" value="2"/>
</dbReference>
<dbReference type="HAMAP" id="MF_01022">
    <property type="entry name" value="Bifunc_HisB"/>
    <property type="match status" value="1"/>
</dbReference>
<dbReference type="HAMAP" id="MF_00076">
    <property type="entry name" value="HisB"/>
    <property type="match status" value="1"/>
</dbReference>
<dbReference type="InterPro" id="IPR036412">
    <property type="entry name" value="HAD-like_sf"/>
</dbReference>
<dbReference type="InterPro" id="IPR006549">
    <property type="entry name" value="HAD-SF_hydro_IIIA"/>
</dbReference>
<dbReference type="InterPro" id="IPR023214">
    <property type="entry name" value="HAD_sf"/>
</dbReference>
<dbReference type="InterPro" id="IPR020566">
    <property type="entry name" value="His_synth_bifunc_HisB"/>
</dbReference>
<dbReference type="InterPro" id="IPR005954">
    <property type="entry name" value="HisB_N"/>
</dbReference>
<dbReference type="InterPro" id="IPR006543">
    <property type="entry name" value="Histidinol-phos"/>
</dbReference>
<dbReference type="InterPro" id="IPR038494">
    <property type="entry name" value="IGPD_sf"/>
</dbReference>
<dbReference type="InterPro" id="IPR000807">
    <property type="entry name" value="ImidazoleglycerolP_deHydtase"/>
</dbReference>
<dbReference type="InterPro" id="IPR020565">
    <property type="entry name" value="ImidazoleglycerP_deHydtase_CS"/>
</dbReference>
<dbReference type="InterPro" id="IPR020568">
    <property type="entry name" value="Ribosomal_Su5_D2-typ_SF"/>
</dbReference>
<dbReference type="NCBIfam" id="TIGR01662">
    <property type="entry name" value="HAD-SF-IIIA"/>
    <property type="match status" value="1"/>
</dbReference>
<dbReference type="NCBIfam" id="TIGR01261">
    <property type="entry name" value="hisB_Nterm"/>
    <property type="match status" value="1"/>
</dbReference>
<dbReference type="NCBIfam" id="TIGR01656">
    <property type="entry name" value="Histidinol-ppas"/>
    <property type="match status" value="1"/>
</dbReference>
<dbReference type="NCBIfam" id="NF003937">
    <property type="entry name" value="PRK05446.1"/>
    <property type="match status" value="1"/>
</dbReference>
<dbReference type="PANTHER" id="PTHR23133:SF2">
    <property type="entry name" value="IMIDAZOLEGLYCEROL-PHOSPHATE DEHYDRATASE"/>
    <property type="match status" value="1"/>
</dbReference>
<dbReference type="PANTHER" id="PTHR23133">
    <property type="entry name" value="IMIDAZOLEGLYCEROL-PHOSPHATE DEHYDRATASE HIS7"/>
    <property type="match status" value="1"/>
</dbReference>
<dbReference type="Pfam" id="PF13242">
    <property type="entry name" value="Hydrolase_like"/>
    <property type="match status" value="1"/>
</dbReference>
<dbReference type="Pfam" id="PF00475">
    <property type="entry name" value="IGPD"/>
    <property type="match status" value="1"/>
</dbReference>
<dbReference type="SUPFAM" id="SSF56784">
    <property type="entry name" value="HAD-like"/>
    <property type="match status" value="1"/>
</dbReference>
<dbReference type="SUPFAM" id="SSF54211">
    <property type="entry name" value="Ribosomal protein S5 domain 2-like"/>
    <property type="match status" value="2"/>
</dbReference>
<dbReference type="PROSITE" id="PS00954">
    <property type="entry name" value="IGP_DEHYDRATASE_1"/>
    <property type="match status" value="1"/>
</dbReference>
<dbReference type="PROSITE" id="PS00955">
    <property type="entry name" value="IGP_DEHYDRATASE_2"/>
    <property type="match status" value="1"/>
</dbReference>
<comment type="catalytic activity">
    <reaction evidence="1">
        <text>D-erythro-1-(imidazol-4-yl)glycerol 3-phosphate = 3-(imidazol-4-yl)-2-oxopropyl phosphate + H2O</text>
        <dbReference type="Rhea" id="RHEA:11040"/>
        <dbReference type="ChEBI" id="CHEBI:15377"/>
        <dbReference type="ChEBI" id="CHEBI:57766"/>
        <dbReference type="ChEBI" id="CHEBI:58278"/>
        <dbReference type="EC" id="4.2.1.19"/>
    </reaction>
</comment>
<comment type="catalytic activity">
    <reaction evidence="1">
        <text>L-histidinol phosphate + H2O = L-histidinol + phosphate</text>
        <dbReference type="Rhea" id="RHEA:14465"/>
        <dbReference type="ChEBI" id="CHEBI:15377"/>
        <dbReference type="ChEBI" id="CHEBI:43474"/>
        <dbReference type="ChEBI" id="CHEBI:57699"/>
        <dbReference type="ChEBI" id="CHEBI:57980"/>
        <dbReference type="EC" id="3.1.3.15"/>
    </reaction>
</comment>
<comment type="cofactor">
    <cofactor evidence="1">
        <name>Mg(2+)</name>
        <dbReference type="ChEBI" id="CHEBI:18420"/>
    </cofactor>
</comment>
<comment type="pathway">
    <text evidence="1">Amino-acid biosynthesis; L-histidine biosynthesis; L-histidine from 5-phospho-alpha-D-ribose 1-diphosphate: step 6/9.</text>
</comment>
<comment type="pathway">
    <text evidence="1">Amino-acid biosynthesis; L-histidine biosynthesis; L-histidine from 5-phospho-alpha-D-ribose 1-diphosphate: step 8/9.</text>
</comment>
<comment type="subcellular location">
    <subcellularLocation>
        <location evidence="1">Cytoplasm</location>
    </subcellularLocation>
</comment>
<comment type="similarity">
    <text evidence="1">In the N-terminal section; belongs to the histidinol-phosphatase family.</text>
</comment>
<comment type="similarity">
    <text evidence="1">In the C-terminal section; belongs to the imidazoleglycerol-phosphate dehydratase family.</text>
</comment>
<evidence type="ECO:0000255" key="1">
    <source>
        <dbReference type="HAMAP-Rule" id="MF_01022"/>
    </source>
</evidence>
<reference key="1">
    <citation type="journal article" date="2002" name="Nature">
        <title>Comparison of the genomes of two Xanthomonas pathogens with differing host specificities.</title>
        <authorList>
            <person name="da Silva A.C.R."/>
            <person name="Ferro J.A."/>
            <person name="Reinach F.C."/>
            <person name="Farah C.S."/>
            <person name="Furlan L.R."/>
            <person name="Quaggio R.B."/>
            <person name="Monteiro-Vitorello C.B."/>
            <person name="Van Sluys M.A."/>
            <person name="Almeida N.F. Jr."/>
            <person name="Alves L.M.C."/>
            <person name="do Amaral A.M."/>
            <person name="Bertolini M.C."/>
            <person name="Camargo L.E.A."/>
            <person name="Camarotte G."/>
            <person name="Cannavan F."/>
            <person name="Cardozo J."/>
            <person name="Chambergo F."/>
            <person name="Ciapina L.P."/>
            <person name="Cicarelli R.M.B."/>
            <person name="Coutinho L.L."/>
            <person name="Cursino-Santos J.R."/>
            <person name="El-Dorry H."/>
            <person name="Faria J.B."/>
            <person name="Ferreira A.J.S."/>
            <person name="Ferreira R.C.C."/>
            <person name="Ferro M.I.T."/>
            <person name="Formighieri E.F."/>
            <person name="Franco M.C."/>
            <person name="Greggio C.C."/>
            <person name="Gruber A."/>
            <person name="Katsuyama A.M."/>
            <person name="Kishi L.T."/>
            <person name="Leite R.P."/>
            <person name="Lemos E.G.M."/>
            <person name="Lemos M.V.F."/>
            <person name="Locali E.C."/>
            <person name="Machado M.A."/>
            <person name="Madeira A.M.B.N."/>
            <person name="Martinez-Rossi N.M."/>
            <person name="Martins E.C."/>
            <person name="Meidanis J."/>
            <person name="Menck C.F.M."/>
            <person name="Miyaki C.Y."/>
            <person name="Moon D.H."/>
            <person name="Moreira L.M."/>
            <person name="Novo M.T.M."/>
            <person name="Okura V.K."/>
            <person name="Oliveira M.C."/>
            <person name="Oliveira V.R."/>
            <person name="Pereira H.A."/>
            <person name="Rossi A."/>
            <person name="Sena J.A.D."/>
            <person name="Silva C."/>
            <person name="de Souza R.F."/>
            <person name="Spinola L.A.F."/>
            <person name="Takita M.A."/>
            <person name="Tamura R.E."/>
            <person name="Teixeira E.C."/>
            <person name="Tezza R.I.D."/>
            <person name="Trindade dos Santos M."/>
            <person name="Truffi D."/>
            <person name="Tsai S.M."/>
            <person name="White F.F."/>
            <person name="Setubal J.C."/>
            <person name="Kitajima J.P."/>
        </authorList>
    </citation>
    <scope>NUCLEOTIDE SEQUENCE [LARGE SCALE GENOMIC DNA]</scope>
    <source>
        <strain>306</strain>
    </source>
</reference>
<protein>
    <recommendedName>
        <fullName evidence="1">Histidine biosynthesis bifunctional protein HisB</fullName>
    </recommendedName>
    <domain>
        <recommendedName>
            <fullName evidence="1">Histidinol-phosphatase</fullName>
            <ecNumber evidence="1">3.1.3.15</ecNumber>
        </recommendedName>
    </domain>
    <domain>
        <recommendedName>
            <fullName evidence="1">Imidazoleglycerol-phosphate dehydratase</fullName>
            <shortName evidence="1">IGPD</shortName>
            <ecNumber evidence="1">4.2.1.19</ecNumber>
        </recommendedName>
    </domain>
</protein>